<protein>
    <recommendedName>
        <fullName>Maintenance of telomere capping protein 2</fullName>
    </recommendedName>
</protein>
<sequence length="357" mass="39808">MGDHNLPDFQTCLKFSVTAKKSFLCMYRDSVSKEKLASSMPSTCDIQLKRAINDAYPGGGIKVTVLNSTTASLDSLATTHVKEFEIVIIPDINSLLQPDQAKLVKIMRDCTVAIEKAQSTRIFIGVVHWNNPVQPSGAAKDGDEAGKPAPKTRIFLPTSLRMGAWLKHKFWFACAPPYLDFESSTESSINTRANNSIGMAEEEKQEPESKRSIILNEEANLNDVFVGSTVRRYILDIMVHLRTHRLTYNAKAGGVYTNSLDDVVLLSRLIGLHSGKMFVSPSHVKEASRWYFPMHLELVQRSSMDSSLLYGSDPNLVDEMLEKLAKIKCEEVNEFENPLFLESLVVKNVLSKVVPPV</sequence>
<feature type="chain" id="PRO_0000407769" description="Maintenance of telomere capping protein 2">
    <location>
        <begin position="1"/>
        <end position="357"/>
    </location>
</feature>
<accession>C8ZC77</accession>
<comment type="function">
    <text evidence="1">May be involved in telomere capping.</text>
</comment>
<comment type="similarity">
    <text evidence="2">Belongs to the MTC2 family.</text>
</comment>
<name>MTC2_YEAS8</name>
<evidence type="ECO:0000250" key="1"/>
<evidence type="ECO:0000305" key="2"/>
<proteinExistence type="inferred from homology"/>
<organism>
    <name type="scientific">Saccharomyces cerevisiae (strain Lalvin EC1118 / Prise de mousse)</name>
    <name type="common">Baker's yeast</name>
    <dbReference type="NCBI Taxonomy" id="643680"/>
    <lineage>
        <taxon>Eukaryota</taxon>
        <taxon>Fungi</taxon>
        <taxon>Dikarya</taxon>
        <taxon>Ascomycota</taxon>
        <taxon>Saccharomycotina</taxon>
        <taxon>Saccharomycetes</taxon>
        <taxon>Saccharomycetales</taxon>
        <taxon>Saccharomycetaceae</taxon>
        <taxon>Saccharomyces</taxon>
    </lineage>
</organism>
<reference key="1">
    <citation type="journal article" date="2009" name="Proc. Natl. Acad. Sci. U.S.A.">
        <title>Eukaryote-to-eukaryote gene transfer events revealed by the genome sequence of the wine yeast Saccharomyces cerevisiae EC1118.</title>
        <authorList>
            <person name="Novo M."/>
            <person name="Bigey F."/>
            <person name="Beyne E."/>
            <person name="Galeote V."/>
            <person name="Gavory F."/>
            <person name="Mallet S."/>
            <person name="Cambon B."/>
            <person name="Legras J.-L."/>
            <person name="Wincker P."/>
            <person name="Casaregola S."/>
            <person name="Dequin S."/>
        </authorList>
    </citation>
    <scope>NUCLEOTIDE SEQUENCE [LARGE SCALE GENOMIC DNA]</scope>
    <source>
        <strain>Lalvin EC1118 / Prise de mousse</strain>
    </source>
</reference>
<dbReference type="EMBL" id="FN393077">
    <property type="protein sequence ID" value="CAY80993.1"/>
    <property type="molecule type" value="Genomic_DNA"/>
</dbReference>
<dbReference type="HOGENOM" id="CLU_060779_1_0_1"/>
<dbReference type="OrthoDB" id="3978at4893"/>
<dbReference type="Proteomes" id="UP000000286">
    <property type="component" value="Chromosome XI, Scaffold EC1118_1K5"/>
</dbReference>
<gene>
    <name type="primary">MTC2</name>
    <name type="ORF">EC1118_1K5_1398g</name>
</gene>